<protein>
    <recommendedName>
        <fullName>G1/S-specific cyclin-D2</fullName>
    </recommendedName>
</protein>
<keyword id="KW-0131">Cell cycle</keyword>
<keyword id="KW-0132">Cell division</keyword>
<keyword id="KW-0195">Cyclin</keyword>
<keyword id="KW-0963">Cytoplasm</keyword>
<keyword id="KW-0472">Membrane</keyword>
<keyword id="KW-0539">Nucleus</keyword>
<keyword id="KW-0597">Phosphoprotein</keyword>
<keyword id="KW-1185">Reference proteome</keyword>
<keyword id="KW-0832">Ubl conjugation</keyword>
<organism>
    <name type="scientific">Bos taurus</name>
    <name type="common">Bovine</name>
    <dbReference type="NCBI Taxonomy" id="9913"/>
    <lineage>
        <taxon>Eukaryota</taxon>
        <taxon>Metazoa</taxon>
        <taxon>Chordata</taxon>
        <taxon>Craniata</taxon>
        <taxon>Vertebrata</taxon>
        <taxon>Euteleostomi</taxon>
        <taxon>Mammalia</taxon>
        <taxon>Eutheria</taxon>
        <taxon>Laurasiatheria</taxon>
        <taxon>Artiodactyla</taxon>
        <taxon>Ruminantia</taxon>
        <taxon>Pecora</taxon>
        <taxon>Bovidae</taxon>
        <taxon>Bovinae</taxon>
        <taxon>Bos</taxon>
    </lineage>
</organism>
<reference key="1">
    <citation type="submission" date="2006-08" db="EMBL/GenBank/DDBJ databases">
        <authorList>
            <consortium name="NIH - Mammalian Gene Collection (MGC) project"/>
        </authorList>
    </citation>
    <scope>NUCLEOTIDE SEQUENCE [LARGE SCALE MRNA]</scope>
    <source>
        <strain>Hereford</strain>
        <tissue>Fetal brain</tissue>
    </source>
</reference>
<accession>Q0P5D3</accession>
<feature type="chain" id="PRO_0000282333" description="G1/S-specific cyclin-D2">
    <location>
        <begin position="1"/>
        <end position="289"/>
    </location>
</feature>
<feature type="domain" description="Cyclin N-terminal">
    <location>
        <begin position="26"/>
        <end position="151"/>
    </location>
</feature>
<feature type="region of interest" description="Disordered" evidence="4">
    <location>
        <begin position="264"/>
        <end position="289"/>
    </location>
</feature>
<feature type="modified residue" description="Phosphoserine" evidence="2">
    <location>
        <position position="271"/>
    </location>
</feature>
<feature type="modified residue" description="Phosphothreonine" evidence="3">
    <location>
        <position position="280"/>
    </location>
</feature>
<comment type="function">
    <text evidence="2">Regulatory component of the cyclin D2-CDK4 (DC) complex that phosphorylates and inhibits members of the retinoblastoma (RB) protein family including RB1 and regulates the cell-cycle during G(1)/S transition. Phosphorylation of RB1 allows dissociation of the transcription factor E2F from the RB/E2F complex and the subsequent transcription of E2F target genes which are responsible for the progression through the G(1) phase. Hypophosphorylates RB1 in early G(1) phase. Cyclin D-CDK4 complexes are major integrators of various mitogenenic and antimitogenic signals.</text>
</comment>
<comment type="subunit">
    <text evidence="2">Interacts with either CDK4 or CDK6 protein kinase to form a serine/threonine kinase holoenzyme complex. The cyclin subunit imparts substrate specificity to the complex.</text>
</comment>
<comment type="subcellular location">
    <subcellularLocation>
        <location evidence="2">Nucleus</location>
    </subcellularLocation>
    <subcellularLocation>
        <location evidence="2">Cytoplasm</location>
    </subcellularLocation>
    <subcellularLocation>
        <location evidence="2">Nucleus membrane</location>
    </subcellularLocation>
    <text evidence="2">Cyclin D-CDK4 complexes accumulate at the nuclear membrane and are then translocated into the nucleus through interaction with KIP/CIP family members.</text>
</comment>
<comment type="PTM">
    <text evidence="1">Phosphorylation at Thr-280 by MAP kinases is required for ubiquitination and degradation by the DCX(AMBRA1) complex.</text>
</comment>
<comment type="PTM">
    <text evidence="2 3">Ubiquitinated by the DCX(AMBRA1) complex during the transition from G1 to S cell phase, leading to its degradation: ubiquitination is dependent on Thr-280 phosphorylation. The DCX(AMBRA1) complex represents the major regulator of CCND2 stability during the G1/S transition (By similarity). Polyubiquitinated by the SCF(FBXL2) complex, leading to proteasomal degradation (By similarity).</text>
</comment>
<comment type="similarity">
    <text evidence="5">Belongs to the cyclin family. Cyclin D subfamily.</text>
</comment>
<evidence type="ECO:0000250" key="1">
    <source>
        <dbReference type="UniProtKB" id="P24385"/>
    </source>
</evidence>
<evidence type="ECO:0000250" key="2">
    <source>
        <dbReference type="UniProtKB" id="P30279"/>
    </source>
</evidence>
<evidence type="ECO:0000250" key="3">
    <source>
        <dbReference type="UniProtKB" id="P30280"/>
    </source>
</evidence>
<evidence type="ECO:0000256" key="4">
    <source>
        <dbReference type="SAM" id="MobiDB-lite"/>
    </source>
</evidence>
<evidence type="ECO:0000305" key="5"/>
<dbReference type="EMBL" id="BC120199">
    <property type="protein sequence ID" value="AAI20200.1"/>
    <property type="molecule type" value="mRNA"/>
</dbReference>
<dbReference type="RefSeq" id="NP_001069840.1">
    <property type="nucleotide sequence ID" value="NM_001076372.1"/>
</dbReference>
<dbReference type="SMR" id="Q0P5D3"/>
<dbReference type="FunCoup" id="Q0P5D3">
    <property type="interactions" value="941"/>
</dbReference>
<dbReference type="STRING" id="9913.ENSBTAP00000022145"/>
<dbReference type="PaxDb" id="9913-ENSBTAP00000022145"/>
<dbReference type="Ensembl" id="ENSBTAT00000022145.6">
    <property type="protein sequence ID" value="ENSBTAP00000022145.4"/>
    <property type="gene ID" value="ENSBTAG00000016649.6"/>
</dbReference>
<dbReference type="GeneID" id="615414"/>
<dbReference type="KEGG" id="bta:615414"/>
<dbReference type="CTD" id="894"/>
<dbReference type="VEuPathDB" id="HostDB:ENSBTAG00000016649"/>
<dbReference type="VGNC" id="VGNC:26963">
    <property type="gene designation" value="CCND2"/>
</dbReference>
<dbReference type="eggNOG" id="KOG0656">
    <property type="taxonomic scope" value="Eukaryota"/>
</dbReference>
<dbReference type="GeneTree" id="ENSGT00940000155180"/>
<dbReference type="HOGENOM" id="CLU_052190_0_0_1"/>
<dbReference type="InParanoid" id="Q0P5D3"/>
<dbReference type="OMA" id="CLEMDTN"/>
<dbReference type="OrthoDB" id="306099at2759"/>
<dbReference type="TreeFam" id="TF101004"/>
<dbReference type="Reactome" id="R-BTA-69231">
    <property type="pathway name" value="Cyclin D associated events in G1"/>
</dbReference>
<dbReference type="Reactome" id="R-BTA-8934593">
    <property type="pathway name" value="Regulation of RUNX1 Expression and Activity"/>
</dbReference>
<dbReference type="Reactome" id="R-BTA-9754119">
    <property type="pathway name" value="Drug-mediated inhibition of CDK4/CDK6 activity"/>
</dbReference>
<dbReference type="Proteomes" id="UP000009136">
    <property type="component" value="Chromosome 5"/>
</dbReference>
<dbReference type="Bgee" id="ENSBTAG00000016649">
    <property type="expression patterns" value="Expressed in cumulus cell and 107 other cell types or tissues"/>
</dbReference>
<dbReference type="GO" id="GO:0000307">
    <property type="term" value="C:cyclin-dependent protein kinase holoenzyme complex"/>
    <property type="evidence" value="ECO:0000318"/>
    <property type="project" value="GO_Central"/>
</dbReference>
<dbReference type="GO" id="GO:0005737">
    <property type="term" value="C:cytoplasm"/>
    <property type="evidence" value="ECO:0000318"/>
    <property type="project" value="GO_Central"/>
</dbReference>
<dbReference type="GO" id="GO:0005815">
    <property type="term" value="C:microtubule organizing center"/>
    <property type="evidence" value="ECO:0000318"/>
    <property type="project" value="GO_Central"/>
</dbReference>
<dbReference type="GO" id="GO:0031965">
    <property type="term" value="C:nuclear membrane"/>
    <property type="evidence" value="ECO:0007669"/>
    <property type="project" value="UniProtKB-SubCell"/>
</dbReference>
<dbReference type="GO" id="GO:0005634">
    <property type="term" value="C:nucleus"/>
    <property type="evidence" value="ECO:0000318"/>
    <property type="project" value="GO_Central"/>
</dbReference>
<dbReference type="GO" id="GO:0016538">
    <property type="term" value="F:cyclin-dependent protein serine/threonine kinase regulator activity"/>
    <property type="evidence" value="ECO:0000318"/>
    <property type="project" value="GO_Central"/>
</dbReference>
<dbReference type="GO" id="GO:0051301">
    <property type="term" value="P:cell division"/>
    <property type="evidence" value="ECO:0007669"/>
    <property type="project" value="UniProtKB-KW"/>
</dbReference>
<dbReference type="GO" id="GO:0000082">
    <property type="term" value="P:G1/S transition of mitotic cell cycle"/>
    <property type="evidence" value="ECO:0000318"/>
    <property type="project" value="GO_Central"/>
</dbReference>
<dbReference type="GO" id="GO:1900087">
    <property type="term" value="P:positive regulation of G1/S transition of mitotic cell cycle"/>
    <property type="evidence" value="ECO:0000318"/>
    <property type="project" value="GO_Central"/>
</dbReference>
<dbReference type="CDD" id="cd20577">
    <property type="entry name" value="CYCLIN_CCND2_rpt2"/>
    <property type="match status" value="1"/>
</dbReference>
<dbReference type="FunFam" id="1.10.472.10:FF:000012">
    <property type="entry name" value="G1/S-specific cyclin-D1"/>
    <property type="match status" value="1"/>
</dbReference>
<dbReference type="FunFam" id="1.10.472.10:FF:000120">
    <property type="entry name" value="G1/S-specific cyclin-D1"/>
    <property type="match status" value="1"/>
</dbReference>
<dbReference type="Gene3D" id="1.10.472.10">
    <property type="entry name" value="Cyclin-like"/>
    <property type="match status" value="2"/>
</dbReference>
<dbReference type="InterPro" id="IPR039361">
    <property type="entry name" value="Cyclin"/>
</dbReference>
<dbReference type="InterPro" id="IPR013763">
    <property type="entry name" value="Cyclin-like_dom"/>
</dbReference>
<dbReference type="InterPro" id="IPR036915">
    <property type="entry name" value="Cyclin-like_sf"/>
</dbReference>
<dbReference type="InterPro" id="IPR004367">
    <property type="entry name" value="Cyclin_C-dom"/>
</dbReference>
<dbReference type="InterPro" id="IPR006671">
    <property type="entry name" value="Cyclin_N"/>
</dbReference>
<dbReference type="InterPro" id="IPR048258">
    <property type="entry name" value="Cyclins_cyclin-box"/>
</dbReference>
<dbReference type="PANTHER" id="PTHR10177">
    <property type="entry name" value="CYCLINS"/>
    <property type="match status" value="1"/>
</dbReference>
<dbReference type="Pfam" id="PF02984">
    <property type="entry name" value="Cyclin_C"/>
    <property type="match status" value="1"/>
</dbReference>
<dbReference type="Pfam" id="PF00134">
    <property type="entry name" value="Cyclin_N"/>
    <property type="match status" value="1"/>
</dbReference>
<dbReference type="SMART" id="SM00385">
    <property type="entry name" value="CYCLIN"/>
    <property type="match status" value="1"/>
</dbReference>
<dbReference type="SMART" id="SM01332">
    <property type="entry name" value="Cyclin_C"/>
    <property type="match status" value="1"/>
</dbReference>
<dbReference type="SUPFAM" id="SSF47954">
    <property type="entry name" value="Cyclin-like"/>
    <property type="match status" value="2"/>
</dbReference>
<dbReference type="PROSITE" id="PS00292">
    <property type="entry name" value="CYCLINS"/>
    <property type="match status" value="1"/>
</dbReference>
<sequence>MELLCGEVEPVRRAVPDANLLHDDRVLQNLLTIEERYLPQCSYFKCVQKDIQPYMRRMVATWMLEVCEEQKCEEEVFPLAINYLDRFLAGVPTPKTHLQLLGAVCMFLASKLKETIPLTAEKLCIYTDNSIKPQELLEWELVVLGKLKWNLAAVTPHDFIEHILRKLPQPSEKLSLIRKHAQTFIALCATDFKFAMYPPSMIATGSVGAAICGLQQDEDVSSLTGDALVDLLAKITNTDVDCLKACQEQIEVVLLNSLQQYRQDQGDGSKSEDELDQASTPTDVRDIDL</sequence>
<name>CCND2_BOVIN</name>
<proteinExistence type="evidence at transcript level"/>
<gene>
    <name type="primary">CCND2</name>
</gene>